<name>DXS_HISS1</name>
<evidence type="ECO:0000255" key="1">
    <source>
        <dbReference type="HAMAP-Rule" id="MF_00315"/>
    </source>
</evidence>
<dbReference type="EC" id="2.2.1.7" evidence="1"/>
<dbReference type="EMBL" id="CP000436">
    <property type="protein sequence ID" value="ABI25180.1"/>
    <property type="molecule type" value="Genomic_DNA"/>
</dbReference>
<dbReference type="SMR" id="Q0I3G1"/>
<dbReference type="KEGG" id="hso:HS_0905"/>
<dbReference type="eggNOG" id="COG1154">
    <property type="taxonomic scope" value="Bacteria"/>
</dbReference>
<dbReference type="HOGENOM" id="CLU_009227_1_4_6"/>
<dbReference type="UniPathway" id="UPA00064">
    <property type="reaction ID" value="UER00091"/>
</dbReference>
<dbReference type="GO" id="GO:0005829">
    <property type="term" value="C:cytosol"/>
    <property type="evidence" value="ECO:0007669"/>
    <property type="project" value="TreeGrafter"/>
</dbReference>
<dbReference type="GO" id="GO:0008661">
    <property type="term" value="F:1-deoxy-D-xylulose-5-phosphate synthase activity"/>
    <property type="evidence" value="ECO:0007669"/>
    <property type="project" value="UniProtKB-UniRule"/>
</dbReference>
<dbReference type="GO" id="GO:0000287">
    <property type="term" value="F:magnesium ion binding"/>
    <property type="evidence" value="ECO:0007669"/>
    <property type="project" value="UniProtKB-UniRule"/>
</dbReference>
<dbReference type="GO" id="GO:0030976">
    <property type="term" value="F:thiamine pyrophosphate binding"/>
    <property type="evidence" value="ECO:0007669"/>
    <property type="project" value="UniProtKB-UniRule"/>
</dbReference>
<dbReference type="GO" id="GO:0052865">
    <property type="term" value="P:1-deoxy-D-xylulose 5-phosphate biosynthetic process"/>
    <property type="evidence" value="ECO:0007669"/>
    <property type="project" value="UniProtKB-UniPathway"/>
</dbReference>
<dbReference type="GO" id="GO:0019288">
    <property type="term" value="P:isopentenyl diphosphate biosynthetic process, methylerythritol 4-phosphate pathway"/>
    <property type="evidence" value="ECO:0007669"/>
    <property type="project" value="TreeGrafter"/>
</dbReference>
<dbReference type="GO" id="GO:0016114">
    <property type="term" value="P:terpenoid biosynthetic process"/>
    <property type="evidence" value="ECO:0007669"/>
    <property type="project" value="UniProtKB-UniRule"/>
</dbReference>
<dbReference type="GO" id="GO:0009228">
    <property type="term" value="P:thiamine biosynthetic process"/>
    <property type="evidence" value="ECO:0007669"/>
    <property type="project" value="UniProtKB-UniRule"/>
</dbReference>
<dbReference type="CDD" id="cd02007">
    <property type="entry name" value="TPP_DXS"/>
    <property type="match status" value="1"/>
</dbReference>
<dbReference type="CDD" id="cd07033">
    <property type="entry name" value="TPP_PYR_DXS_TK_like"/>
    <property type="match status" value="1"/>
</dbReference>
<dbReference type="FunFam" id="3.40.50.920:FF:000002">
    <property type="entry name" value="1-deoxy-D-xylulose-5-phosphate synthase"/>
    <property type="match status" value="1"/>
</dbReference>
<dbReference type="FunFam" id="3.40.50.970:FF:000005">
    <property type="entry name" value="1-deoxy-D-xylulose-5-phosphate synthase"/>
    <property type="match status" value="1"/>
</dbReference>
<dbReference type="Gene3D" id="3.40.50.920">
    <property type="match status" value="1"/>
</dbReference>
<dbReference type="Gene3D" id="3.40.50.970">
    <property type="match status" value="2"/>
</dbReference>
<dbReference type="HAMAP" id="MF_00315">
    <property type="entry name" value="DXP_synth"/>
    <property type="match status" value="1"/>
</dbReference>
<dbReference type="InterPro" id="IPR005477">
    <property type="entry name" value="Dxylulose-5-P_synthase"/>
</dbReference>
<dbReference type="InterPro" id="IPR029061">
    <property type="entry name" value="THDP-binding"/>
</dbReference>
<dbReference type="InterPro" id="IPR009014">
    <property type="entry name" value="Transketo_C/PFOR_II"/>
</dbReference>
<dbReference type="InterPro" id="IPR005475">
    <property type="entry name" value="Transketolase-like_Pyr-bd"/>
</dbReference>
<dbReference type="InterPro" id="IPR020826">
    <property type="entry name" value="Transketolase_BS"/>
</dbReference>
<dbReference type="InterPro" id="IPR033248">
    <property type="entry name" value="Transketolase_C"/>
</dbReference>
<dbReference type="InterPro" id="IPR049557">
    <property type="entry name" value="Transketolase_CS"/>
</dbReference>
<dbReference type="NCBIfam" id="TIGR00204">
    <property type="entry name" value="dxs"/>
    <property type="match status" value="1"/>
</dbReference>
<dbReference type="NCBIfam" id="NF003933">
    <property type="entry name" value="PRK05444.2-2"/>
    <property type="match status" value="1"/>
</dbReference>
<dbReference type="PANTHER" id="PTHR43322">
    <property type="entry name" value="1-D-DEOXYXYLULOSE 5-PHOSPHATE SYNTHASE-RELATED"/>
    <property type="match status" value="1"/>
</dbReference>
<dbReference type="PANTHER" id="PTHR43322:SF5">
    <property type="entry name" value="1-DEOXY-D-XYLULOSE-5-PHOSPHATE SYNTHASE, CHLOROPLASTIC"/>
    <property type="match status" value="1"/>
</dbReference>
<dbReference type="Pfam" id="PF13292">
    <property type="entry name" value="DXP_synthase_N"/>
    <property type="match status" value="1"/>
</dbReference>
<dbReference type="Pfam" id="PF02779">
    <property type="entry name" value="Transket_pyr"/>
    <property type="match status" value="1"/>
</dbReference>
<dbReference type="Pfam" id="PF02780">
    <property type="entry name" value="Transketolase_C"/>
    <property type="match status" value="1"/>
</dbReference>
<dbReference type="SMART" id="SM00861">
    <property type="entry name" value="Transket_pyr"/>
    <property type="match status" value="1"/>
</dbReference>
<dbReference type="SUPFAM" id="SSF52518">
    <property type="entry name" value="Thiamin diphosphate-binding fold (THDP-binding)"/>
    <property type="match status" value="2"/>
</dbReference>
<dbReference type="SUPFAM" id="SSF52922">
    <property type="entry name" value="TK C-terminal domain-like"/>
    <property type="match status" value="1"/>
</dbReference>
<dbReference type="PROSITE" id="PS00801">
    <property type="entry name" value="TRANSKETOLASE_1"/>
    <property type="match status" value="1"/>
</dbReference>
<dbReference type="PROSITE" id="PS00802">
    <property type="entry name" value="TRANSKETOLASE_2"/>
    <property type="match status" value="1"/>
</dbReference>
<sequence length="617" mass="67610">MNKYPLLSLINSPDDLRLLSKDKLPQLCQELRSYLLESVSQSSGHLASGLGTVELTVALHYVFKTPFDQLLWDVGHQAYPHKILTGRRDKMSTIRQKGGLHPFPWREESEFDVLSVGHSSTSISAGLGIAIAAQKENLGRKTICVIGDGAITAGMAFEALNHAGSVHTDMLVILNDNEMSISENVGALNNHLARLLSGSIYSTLRESGKKILSGLPPIKEFVKKTEEHVKGFVSPVGTLFEQLGFNYIGPIDGHNIHELISTLKNMQSLSGPQFLHIKTKKGKGYAPAEKDPIGFHGVPKFDHKLGELPKSSTTPTYSQIFGSWLCEIAVQDEKLIGITPAMREGSGMVEFSQQFPQQYFDVAIAEQHAVTFAAGLAIAGYKPVVAIYSTFLQRAYDQLIHDVAIQNLPVLFAIDRAGIVGADGQTHQGAFDLSFMRCIPNLVIMTPSNENECRQMLYTGYKCGKPAAVRYPRGNAIGVKLEPLAELPLGKSKLIRQGKNIAILNFGTLLSEATKVAEDLDATVVDMRFVKPLDTQRIQEIAQTHSLIVTLEENAIQGGAGSAVAETLYQQQQKVSLLQLGLPDNFIPQGTQKEMLAELKLNAEGIFEQIKQFLQKI</sequence>
<comment type="function">
    <text evidence="1">Catalyzes the acyloin condensation reaction between C atoms 2 and 3 of pyruvate and glyceraldehyde 3-phosphate to yield 1-deoxy-D-xylulose-5-phosphate (DXP).</text>
</comment>
<comment type="catalytic activity">
    <reaction evidence="1">
        <text>D-glyceraldehyde 3-phosphate + pyruvate + H(+) = 1-deoxy-D-xylulose 5-phosphate + CO2</text>
        <dbReference type="Rhea" id="RHEA:12605"/>
        <dbReference type="ChEBI" id="CHEBI:15361"/>
        <dbReference type="ChEBI" id="CHEBI:15378"/>
        <dbReference type="ChEBI" id="CHEBI:16526"/>
        <dbReference type="ChEBI" id="CHEBI:57792"/>
        <dbReference type="ChEBI" id="CHEBI:59776"/>
        <dbReference type="EC" id="2.2.1.7"/>
    </reaction>
</comment>
<comment type="cofactor">
    <cofactor evidence="1">
        <name>Mg(2+)</name>
        <dbReference type="ChEBI" id="CHEBI:18420"/>
    </cofactor>
    <text evidence="1">Binds 1 Mg(2+) ion per subunit.</text>
</comment>
<comment type="cofactor">
    <cofactor evidence="1">
        <name>thiamine diphosphate</name>
        <dbReference type="ChEBI" id="CHEBI:58937"/>
    </cofactor>
    <text evidence="1">Binds 1 thiamine pyrophosphate per subunit.</text>
</comment>
<comment type="pathway">
    <text evidence="1">Metabolic intermediate biosynthesis; 1-deoxy-D-xylulose 5-phosphate biosynthesis; 1-deoxy-D-xylulose 5-phosphate from D-glyceraldehyde 3-phosphate and pyruvate: step 1/1.</text>
</comment>
<comment type="subunit">
    <text evidence="1">Homodimer.</text>
</comment>
<comment type="similarity">
    <text evidence="1">Belongs to the transketolase family. DXPS subfamily.</text>
</comment>
<gene>
    <name evidence="1" type="primary">dxs</name>
    <name type="ordered locus">HS_0905</name>
</gene>
<feature type="chain" id="PRO_1000019033" description="1-deoxy-D-xylulose-5-phosphate synthase">
    <location>
        <begin position="1"/>
        <end position="617"/>
    </location>
</feature>
<feature type="binding site" evidence="1">
    <location>
        <position position="76"/>
    </location>
    <ligand>
        <name>thiamine diphosphate</name>
        <dbReference type="ChEBI" id="CHEBI:58937"/>
    </ligand>
</feature>
<feature type="binding site" evidence="1">
    <location>
        <begin position="117"/>
        <end position="119"/>
    </location>
    <ligand>
        <name>thiamine diphosphate</name>
        <dbReference type="ChEBI" id="CHEBI:58937"/>
    </ligand>
</feature>
<feature type="binding site" evidence="1">
    <location>
        <position position="148"/>
    </location>
    <ligand>
        <name>Mg(2+)</name>
        <dbReference type="ChEBI" id="CHEBI:18420"/>
    </ligand>
</feature>
<feature type="binding site" evidence="1">
    <location>
        <begin position="149"/>
        <end position="150"/>
    </location>
    <ligand>
        <name>thiamine diphosphate</name>
        <dbReference type="ChEBI" id="CHEBI:58937"/>
    </ligand>
</feature>
<feature type="binding site" evidence="1">
    <location>
        <position position="177"/>
    </location>
    <ligand>
        <name>Mg(2+)</name>
        <dbReference type="ChEBI" id="CHEBI:18420"/>
    </ligand>
</feature>
<feature type="binding site" evidence="1">
    <location>
        <position position="177"/>
    </location>
    <ligand>
        <name>thiamine diphosphate</name>
        <dbReference type="ChEBI" id="CHEBI:58937"/>
    </ligand>
</feature>
<feature type="binding site" evidence="1">
    <location>
        <position position="285"/>
    </location>
    <ligand>
        <name>thiamine diphosphate</name>
        <dbReference type="ChEBI" id="CHEBI:58937"/>
    </ligand>
</feature>
<feature type="binding site" evidence="1">
    <location>
        <position position="366"/>
    </location>
    <ligand>
        <name>thiamine diphosphate</name>
        <dbReference type="ChEBI" id="CHEBI:58937"/>
    </ligand>
</feature>
<keyword id="KW-0414">Isoprene biosynthesis</keyword>
<keyword id="KW-0460">Magnesium</keyword>
<keyword id="KW-0479">Metal-binding</keyword>
<keyword id="KW-0784">Thiamine biosynthesis</keyword>
<keyword id="KW-0786">Thiamine pyrophosphate</keyword>
<keyword id="KW-0808">Transferase</keyword>
<reference key="1">
    <citation type="journal article" date="2007" name="J. Bacteriol.">
        <title>Complete genome sequence of Haemophilus somnus (Histophilus somni) strain 129Pt and comparison to Haemophilus ducreyi 35000HP and Haemophilus influenzae Rd.</title>
        <authorList>
            <person name="Challacombe J.F."/>
            <person name="Duncan A.J."/>
            <person name="Brettin T.S."/>
            <person name="Bruce D."/>
            <person name="Chertkov O."/>
            <person name="Detter J.C."/>
            <person name="Han C.S."/>
            <person name="Misra M."/>
            <person name="Richardson P."/>
            <person name="Tapia R."/>
            <person name="Thayer N."/>
            <person name="Xie G."/>
            <person name="Inzana T.J."/>
        </authorList>
    </citation>
    <scope>NUCLEOTIDE SEQUENCE [LARGE SCALE GENOMIC DNA]</scope>
    <source>
        <strain>129Pt</strain>
    </source>
</reference>
<proteinExistence type="inferred from homology"/>
<organism>
    <name type="scientific">Histophilus somni (strain 129Pt)</name>
    <name type="common">Haemophilus somnus</name>
    <dbReference type="NCBI Taxonomy" id="205914"/>
    <lineage>
        <taxon>Bacteria</taxon>
        <taxon>Pseudomonadati</taxon>
        <taxon>Pseudomonadota</taxon>
        <taxon>Gammaproteobacteria</taxon>
        <taxon>Pasteurellales</taxon>
        <taxon>Pasteurellaceae</taxon>
        <taxon>Histophilus</taxon>
    </lineage>
</organism>
<protein>
    <recommendedName>
        <fullName evidence="1">1-deoxy-D-xylulose-5-phosphate synthase</fullName>
        <ecNumber evidence="1">2.2.1.7</ecNumber>
    </recommendedName>
    <alternativeName>
        <fullName evidence="1">1-deoxyxylulose-5-phosphate synthase</fullName>
        <shortName evidence="1">DXP synthase</shortName>
        <shortName evidence="1">DXPS</shortName>
    </alternativeName>
</protein>
<accession>Q0I3G1</accession>